<name>HIS7_RHOOB</name>
<sequence>MTDRIARVERTTKESSITVELNLDGTGIVDVSTGVPFFDHMLTALGSHASFDLTVHAKGDIEIEAHHTVEDTSIVLGQALGQALGDKKGIRRFGDAFIPMDETLAHASVDVSGRPYCVHTGEPEHLLHAVIGGYPGVPYATVINRHVFESIALNARIALHVRVLYGRDQHHITEAEFKAVARALREAVEPDPRVTGVPSTKGSL</sequence>
<reference key="1">
    <citation type="submission" date="2009-03" db="EMBL/GenBank/DDBJ databases">
        <title>Comparison of the complete genome sequences of Rhodococcus erythropolis PR4 and Rhodococcus opacus B4.</title>
        <authorList>
            <person name="Takarada H."/>
            <person name="Sekine M."/>
            <person name="Hosoyama A."/>
            <person name="Yamada R."/>
            <person name="Fujisawa T."/>
            <person name="Omata S."/>
            <person name="Shimizu A."/>
            <person name="Tsukatani N."/>
            <person name="Tanikawa S."/>
            <person name="Fujita N."/>
            <person name="Harayama S."/>
        </authorList>
    </citation>
    <scope>NUCLEOTIDE SEQUENCE [LARGE SCALE GENOMIC DNA]</scope>
    <source>
        <strain>B4</strain>
    </source>
</reference>
<protein>
    <recommendedName>
        <fullName evidence="1">Imidazoleglycerol-phosphate dehydratase</fullName>
        <shortName evidence="1">IGPD</shortName>
        <ecNumber evidence="1">4.2.1.19</ecNumber>
    </recommendedName>
</protein>
<keyword id="KW-0028">Amino-acid biosynthesis</keyword>
<keyword id="KW-0963">Cytoplasm</keyword>
<keyword id="KW-0368">Histidine biosynthesis</keyword>
<keyword id="KW-0456">Lyase</keyword>
<accession>C1ATZ4</accession>
<gene>
    <name evidence="1" type="primary">hisB</name>
    <name type="ordered locus">ROP_07550</name>
</gene>
<comment type="catalytic activity">
    <reaction evidence="1">
        <text>D-erythro-1-(imidazol-4-yl)glycerol 3-phosphate = 3-(imidazol-4-yl)-2-oxopropyl phosphate + H2O</text>
        <dbReference type="Rhea" id="RHEA:11040"/>
        <dbReference type="ChEBI" id="CHEBI:15377"/>
        <dbReference type="ChEBI" id="CHEBI:57766"/>
        <dbReference type="ChEBI" id="CHEBI:58278"/>
        <dbReference type="EC" id="4.2.1.19"/>
    </reaction>
</comment>
<comment type="pathway">
    <text evidence="1">Amino-acid biosynthesis; L-histidine biosynthesis; L-histidine from 5-phospho-alpha-D-ribose 1-diphosphate: step 6/9.</text>
</comment>
<comment type="subcellular location">
    <subcellularLocation>
        <location evidence="1">Cytoplasm</location>
    </subcellularLocation>
</comment>
<comment type="similarity">
    <text evidence="1">Belongs to the imidazoleglycerol-phosphate dehydratase family.</text>
</comment>
<dbReference type="EC" id="4.2.1.19" evidence="1"/>
<dbReference type="EMBL" id="AP011115">
    <property type="protein sequence ID" value="BAH49002.1"/>
    <property type="molecule type" value="Genomic_DNA"/>
</dbReference>
<dbReference type="RefSeq" id="WP_005247522.1">
    <property type="nucleotide sequence ID" value="NC_012522.1"/>
</dbReference>
<dbReference type="SMR" id="C1ATZ4"/>
<dbReference type="STRING" id="632772.ROP_07550"/>
<dbReference type="GeneID" id="69892687"/>
<dbReference type="KEGG" id="rop:ROP_07550"/>
<dbReference type="PATRIC" id="fig|632772.20.peg.818"/>
<dbReference type="HOGENOM" id="CLU_044308_2_0_11"/>
<dbReference type="OrthoDB" id="9790411at2"/>
<dbReference type="UniPathway" id="UPA00031">
    <property type="reaction ID" value="UER00011"/>
</dbReference>
<dbReference type="Proteomes" id="UP000002212">
    <property type="component" value="Chromosome"/>
</dbReference>
<dbReference type="GO" id="GO:0005737">
    <property type="term" value="C:cytoplasm"/>
    <property type="evidence" value="ECO:0007669"/>
    <property type="project" value="UniProtKB-SubCell"/>
</dbReference>
<dbReference type="GO" id="GO:0004424">
    <property type="term" value="F:imidazoleglycerol-phosphate dehydratase activity"/>
    <property type="evidence" value="ECO:0007669"/>
    <property type="project" value="UniProtKB-UniRule"/>
</dbReference>
<dbReference type="GO" id="GO:0000105">
    <property type="term" value="P:L-histidine biosynthetic process"/>
    <property type="evidence" value="ECO:0007669"/>
    <property type="project" value="UniProtKB-UniRule"/>
</dbReference>
<dbReference type="CDD" id="cd07914">
    <property type="entry name" value="IGPD"/>
    <property type="match status" value="1"/>
</dbReference>
<dbReference type="FunFam" id="3.30.230.40:FF:000001">
    <property type="entry name" value="Imidazoleglycerol-phosphate dehydratase HisB"/>
    <property type="match status" value="1"/>
</dbReference>
<dbReference type="FunFam" id="3.30.230.40:FF:000003">
    <property type="entry name" value="Imidazoleglycerol-phosphate dehydratase HisB"/>
    <property type="match status" value="1"/>
</dbReference>
<dbReference type="Gene3D" id="3.30.230.40">
    <property type="entry name" value="Imidazole glycerol phosphate dehydratase, domain 1"/>
    <property type="match status" value="2"/>
</dbReference>
<dbReference type="HAMAP" id="MF_00076">
    <property type="entry name" value="HisB"/>
    <property type="match status" value="1"/>
</dbReference>
<dbReference type="InterPro" id="IPR038494">
    <property type="entry name" value="IGPD_sf"/>
</dbReference>
<dbReference type="InterPro" id="IPR000807">
    <property type="entry name" value="ImidazoleglycerolP_deHydtase"/>
</dbReference>
<dbReference type="InterPro" id="IPR020565">
    <property type="entry name" value="ImidazoleglycerP_deHydtase_CS"/>
</dbReference>
<dbReference type="InterPro" id="IPR020568">
    <property type="entry name" value="Ribosomal_Su5_D2-typ_SF"/>
</dbReference>
<dbReference type="NCBIfam" id="NF002110">
    <property type="entry name" value="PRK00951.1-6"/>
    <property type="match status" value="1"/>
</dbReference>
<dbReference type="NCBIfam" id="NF002111">
    <property type="entry name" value="PRK00951.2-1"/>
    <property type="match status" value="1"/>
</dbReference>
<dbReference type="NCBIfam" id="NF002114">
    <property type="entry name" value="PRK00951.2-4"/>
    <property type="match status" value="1"/>
</dbReference>
<dbReference type="PANTHER" id="PTHR23133:SF2">
    <property type="entry name" value="IMIDAZOLEGLYCEROL-PHOSPHATE DEHYDRATASE"/>
    <property type="match status" value="1"/>
</dbReference>
<dbReference type="PANTHER" id="PTHR23133">
    <property type="entry name" value="IMIDAZOLEGLYCEROL-PHOSPHATE DEHYDRATASE HIS7"/>
    <property type="match status" value="1"/>
</dbReference>
<dbReference type="Pfam" id="PF00475">
    <property type="entry name" value="IGPD"/>
    <property type="match status" value="1"/>
</dbReference>
<dbReference type="SUPFAM" id="SSF54211">
    <property type="entry name" value="Ribosomal protein S5 domain 2-like"/>
    <property type="match status" value="2"/>
</dbReference>
<dbReference type="PROSITE" id="PS00955">
    <property type="entry name" value="IGP_DEHYDRATASE_2"/>
    <property type="match status" value="1"/>
</dbReference>
<proteinExistence type="inferred from homology"/>
<feature type="chain" id="PRO_1000190624" description="Imidazoleglycerol-phosphate dehydratase">
    <location>
        <begin position="1"/>
        <end position="204"/>
    </location>
</feature>
<organism>
    <name type="scientific">Rhodococcus opacus (strain B4)</name>
    <dbReference type="NCBI Taxonomy" id="632772"/>
    <lineage>
        <taxon>Bacteria</taxon>
        <taxon>Bacillati</taxon>
        <taxon>Actinomycetota</taxon>
        <taxon>Actinomycetes</taxon>
        <taxon>Mycobacteriales</taxon>
        <taxon>Nocardiaceae</taxon>
        <taxon>Rhodococcus</taxon>
    </lineage>
</organism>
<evidence type="ECO:0000255" key="1">
    <source>
        <dbReference type="HAMAP-Rule" id="MF_00076"/>
    </source>
</evidence>